<gene>
    <name type="ORF">DDB_G0271196</name>
</gene>
<keyword id="KW-1185">Reference proteome</keyword>
<dbReference type="EMBL" id="AAFI02000006">
    <property type="protein sequence ID" value="EAL71728.1"/>
    <property type="molecule type" value="Genomic_DNA"/>
</dbReference>
<dbReference type="RefSeq" id="XP_645740.1">
    <property type="nucleotide sequence ID" value="XM_640648.1"/>
</dbReference>
<dbReference type="STRING" id="44689.Q55B72"/>
<dbReference type="PaxDb" id="44689-DDB0202768"/>
<dbReference type="EnsemblProtists" id="EAL71728">
    <property type="protein sequence ID" value="EAL71728"/>
    <property type="gene ID" value="DDB_G0271196"/>
</dbReference>
<dbReference type="GeneID" id="8617933"/>
<dbReference type="KEGG" id="ddi:DDB_G0271196"/>
<dbReference type="dictyBase" id="DDB_G0271196">
    <property type="gene designation" value="staC"/>
</dbReference>
<dbReference type="VEuPathDB" id="AmoebaDB:DDB_G0271196"/>
<dbReference type="HOGENOM" id="CLU_167198_0_0_1"/>
<dbReference type="InParanoid" id="Q55B72"/>
<dbReference type="PhylomeDB" id="Q55B72"/>
<dbReference type="PRO" id="PR:Q55B72"/>
<dbReference type="Proteomes" id="UP000002195">
    <property type="component" value="Chromosome 2"/>
</dbReference>
<dbReference type="GO" id="GO:0007155">
    <property type="term" value="P:cell adhesion"/>
    <property type="evidence" value="ECO:0007669"/>
    <property type="project" value="InterPro"/>
</dbReference>
<dbReference type="InterPro" id="IPR008601">
    <property type="entry name" value="Dicty_CAD"/>
</dbReference>
<dbReference type="Pfam" id="PF05720">
    <property type="entry name" value="Dicty_CAD"/>
    <property type="match status" value="1"/>
</dbReference>
<organism>
    <name type="scientific">Dictyostelium discoideum</name>
    <name type="common">Social amoeba</name>
    <dbReference type="NCBI Taxonomy" id="44689"/>
    <lineage>
        <taxon>Eukaryota</taxon>
        <taxon>Amoebozoa</taxon>
        <taxon>Evosea</taxon>
        <taxon>Eumycetozoa</taxon>
        <taxon>Dictyostelia</taxon>
        <taxon>Dictyosteliales</taxon>
        <taxon>Dictyosteliaceae</taxon>
        <taxon>Dictyostelium</taxon>
    </lineage>
</organism>
<reference key="1">
    <citation type="journal article" date="2002" name="Nature">
        <title>Sequence and analysis of chromosome 2 of Dictyostelium discoideum.</title>
        <authorList>
            <person name="Gloeckner G."/>
            <person name="Eichinger L."/>
            <person name="Szafranski K."/>
            <person name="Pachebat J.A."/>
            <person name="Bankier A.T."/>
            <person name="Dear P.H."/>
            <person name="Lehmann R."/>
            <person name="Baumgart C."/>
            <person name="Parra G."/>
            <person name="Abril J.F."/>
            <person name="Guigo R."/>
            <person name="Kumpf K."/>
            <person name="Tunggal B."/>
            <person name="Cox E.C."/>
            <person name="Quail M.A."/>
            <person name="Platzer M."/>
            <person name="Rosenthal A."/>
            <person name="Noegel A.A."/>
        </authorList>
    </citation>
    <scope>NUCLEOTIDE SEQUENCE [LARGE SCALE GENOMIC DNA]</scope>
    <source>
        <strain>AX4</strain>
    </source>
</reference>
<reference key="2">
    <citation type="journal article" date="2005" name="Nature">
        <title>The genome of the social amoeba Dictyostelium discoideum.</title>
        <authorList>
            <person name="Eichinger L."/>
            <person name="Pachebat J.A."/>
            <person name="Gloeckner G."/>
            <person name="Rajandream M.A."/>
            <person name="Sucgang R."/>
            <person name="Berriman M."/>
            <person name="Song J."/>
            <person name="Olsen R."/>
            <person name="Szafranski K."/>
            <person name="Xu Q."/>
            <person name="Tunggal B."/>
            <person name="Kummerfeld S."/>
            <person name="Madera M."/>
            <person name="Konfortov B.A."/>
            <person name="Rivero F."/>
            <person name="Bankier A.T."/>
            <person name="Lehmann R."/>
            <person name="Hamlin N."/>
            <person name="Davies R."/>
            <person name="Gaudet P."/>
            <person name="Fey P."/>
            <person name="Pilcher K."/>
            <person name="Chen G."/>
            <person name="Saunders D."/>
            <person name="Sodergren E.J."/>
            <person name="Davis P."/>
            <person name="Kerhornou A."/>
            <person name="Nie X."/>
            <person name="Hall N."/>
            <person name="Anjard C."/>
            <person name="Hemphill L."/>
            <person name="Bason N."/>
            <person name="Farbrother P."/>
            <person name="Desany B."/>
            <person name="Just E."/>
            <person name="Morio T."/>
            <person name="Rost R."/>
            <person name="Churcher C.M."/>
            <person name="Cooper J."/>
            <person name="Haydock S."/>
            <person name="van Driessche N."/>
            <person name="Cronin A."/>
            <person name="Goodhead I."/>
            <person name="Muzny D.M."/>
            <person name="Mourier T."/>
            <person name="Pain A."/>
            <person name="Lu M."/>
            <person name="Harper D."/>
            <person name="Lindsay R."/>
            <person name="Hauser H."/>
            <person name="James K.D."/>
            <person name="Quiles M."/>
            <person name="Madan Babu M."/>
            <person name="Saito T."/>
            <person name="Buchrieser C."/>
            <person name="Wardroper A."/>
            <person name="Felder M."/>
            <person name="Thangavelu M."/>
            <person name="Johnson D."/>
            <person name="Knights A."/>
            <person name="Loulseged H."/>
            <person name="Mungall K.L."/>
            <person name="Oliver K."/>
            <person name="Price C."/>
            <person name="Quail M.A."/>
            <person name="Urushihara H."/>
            <person name="Hernandez J."/>
            <person name="Rabbinowitsch E."/>
            <person name="Steffen D."/>
            <person name="Sanders M."/>
            <person name="Ma J."/>
            <person name="Kohara Y."/>
            <person name="Sharp S."/>
            <person name="Simmonds M.N."/>
            <person name="Spiegler S."/>
            <person name="Tivey A."/>
            <person name="Sugano S."/>
            <person name="White B."/>
            <person name="Walker D."/>
            <person name="Woodward J.R."/>
            <person name="Winckler T."/>
            <person name="Tanaka Y."/>
            <person name="Shaulsky G."/>
            <person name="Schleicher M."/>
            <person name="Weinstock G.M."/>
            <person name="Rosenthal A."/>
            <person name="Cox E.C."/>
            <person name="Chisholm R.L."/>
            <person name="Gibbs R.A."/>
            <person name="Loomis W.F."/>
            <person name="Platzer M."/>
            <person name="Kay R.R."/>
            <person name="Williams J.G."/>
            <person name="Dear P.H."/>
            <person name="Noegel A.A."/>
            <person name="Barrell B.G."/>
            <person name="Kuspa A."/>
        </authorList>
    </citation>
    <scope>NUCLEOTIDE SEQUENCE [LARGE SCALE GENOMIC DNA]</scope>
    <source>
        <strain>AX4</strain>
    </source>
</reference>
<accession>Q55B72</accession>
<feature type="chain" id="PRO_0000312411" description="Uncharacterized protein csb family protein DDB_G0271196">
    <location>
        <begin position="1"/>
        <end position="106"/>
    </location>
</feature>
<proteinExistence type="inferred from homology"/>
<sequence length="106" mass="12558">MAEEYHQLKITIFTDKGRSTISGFEYPQPILPYPAPYTFRFFHYDIEGPNLTNKEFKVKTGKIEYKGEEFDIPPSSKGSWRREDNLFDLISVTIYPSRQPKKVFHY</sequence>
<evidence type="ECO:0000305" key="1"/>
<protein>
    <recommendedName>
        <fullName>Uncharacterized protein csb family protein DDB_G0271196</fullName>
    </recommendedName>
</protein>
<name>CSBL3_DICDI</name>
<comment type="similarity">
    <text evidence="1">Belongs to the csb family.</text>
</comment>